<protein>
    <recommendedName>
        <fullName evidence="1">Large ribosomal subunit protein uL1</fullName>
    </recommendedName>
    <alternativeName>
        <fullName evidence="2">50S ribosomal protein L1</fullName>
    </alternativeName>
</protein>
<evidence type="ECO:0000255" key="1">
    <source>
        <dbReference type="HAMAP-Rule" id="MF_01318"/>
    </source>
</evidence>
<evidence type="ECO:0000305" key="2"/>
<accession>A9ISF1</accession>
<feature type="chain" id="PRO_1000086272" description="Large ribosomal subunit protein uL1">
    <location>
        <begin position="1"/>
        <end position="234"/>
    </location>
</feature>
<reference key="1">
    <citation type="journal article" date="2007" name="Nat. Genet.">
        <title>Genomic analysis of Bartonella identifies type IV secretion systems as host adaptability factors.</title>
        <authorList>
            <person name="Saenz H.L."/>
            <person name="Engel P."/>
            <person name="Stoeckli M.C."/>
            <person name="Lanz C."/>
            <person name="Raddatz G."/>
            <person name="Vayssier-Taussat M."/>
            <person name="Birtles R."/>
            <person name="Schuster S.C."/>
            <person name="Dehio C."/>
        </authorList>
    </citation>
    <scope>NUCLEOTIDE SEQUENCE [LARGE SCALE GENOMIC DNA]</scope>
    <source>
        <strain>CIP 105476 / IBS 506</strain>
    </source>
</reference>
<name>RL1_BART1</name>
<keyword id="KW-0678">Repressor</keyword>
<keyword id="KW-0687">Ribonucleoprotein</keyword>
<keyword id="KW-0689">Ribosomal protein</keyword>
<keyword id="KW-0694">RNA-binding</keyword>
<keyword id="KW-0699">rRNA-binding</keyword>
<keyword id="KW-0810">Translation regulation</keyword>
<keyword id="KW-0820">tRNA-binding</keyword>
<gene>
    <name evidence="1" type="primary">rplA</name>
    <name type="ordered locus">BT_0892</name>
</gene>
<dbReference type="EMBL" id="AM260525">
    <property type="protein sequence ID" value="CAK01295.1"/>
    <property type="molecule type" value="Genomic_DNA"/>
</dbReference>
<dbReference type="RefSeq" id="WP_012231473.1">
    <property type="nucleotide sequence ID" value="NC_010161.1"/>
</dbReference>
<dbReference type="SMR" id="A9ISF1"/>
<dbReference type="KEGG" id="btr:BT_0892"/>
<dbReference type="eggNOG" id="COG0081">
    <property type="taxonomic scope" value="Bacteria"/>
</dbReference>
<dbReference type="HOGENOM" id="CLU_062853_0_0_5"/>
<dbReference type="Proteomes" id="UP000001592">
    <property type="component" value="Chromosome"/>
</dbReference>
<dbReference type="GO" id="GO:0022625">
    <property type="term" value="C:cytosolic large ribosomal subunit"/>
    <property type="evidence" value="ECO:0007669"/>
    <property type="project" value="TreeGrafter"/>
</dbReference>
<dbReference type="GO" id="GO:0019843">
    <property type="term" value="F:rRNA binding"/>
    <property type="evidence" value="ECO:0007669"/>
    <property type="project" value="UniProtKB-UniRule"/>
</dbReference>
<dbReference type="GO" id="GO:0003735">
    <property type="term" value="F:structural constituent of ribosome"/>
    <property type="evidence" value="ECO:0007669"/>
    <property type="project" value="InterPro"/>
</dbReference>
<dbReference type="GO" id="GO:0000049">
    <property type="term" value="F:tRNA binding"/>
    <property type="evidence" value="ECO:0007669"/>
    <property type="project" value="UniProtKB-KW"/>
</dbReference>
<dbReference type="GO" id="GO:0006417">
    <property type="term" value="P:regulation of translation"/>
    <property type="evidence" value="ECO:0007669"/>
    <property type="project" value="UniProtKB-KW"/>
</dbReference>
<dbReference type="GO" id="GO:0006412">
    <property type="term" value="P:translation"/>
    <property type="evidence" value="ECO:0007669"/>
    <property type="project" value="UniProtKB-UniRule"/>
</dbReference>
<dbReference type="CDD" id="cd00403">
    <property type="entry name" value="Ribosomal_L1"/>
    <property type="match status" value="1"/>
</dbReference>
<dbReference type="FunFam" id="3.40.50.790:FF:000001">
    <property type="entry name" value="50S ribosomal protein L1"/>
    <property type="match status" value="1"/>
</dbReference>
<dbReference type="Gene3D" id="3.30.190.20">
    <property type="match status" value="1"/>
</dbReference>
<dbReference type="Gene3D" id="3.40.50.790">
    <property type="match status" value="1"/>
</dbReference>
<dbReference type="HAMAP" id="MF_01318_B">
    <property type="entry name" value="Ribosomal_uL1_B"/>
    <property type="match status" value="1"/>
</dbReference>
<dbReference type="InterPro" id="IPR005878">
    <property type="entry name" value="Ribosom_uL1_bac-type"/>
</dbReference>
<dbReference type="InterPro" id="IPR002143">
    <property type="entry name" value="Ribosomal_uL1"/>
</dbReference>
<dbReference type="InterPro" id="IPR023674">
    <property type="entry name" value="Ribosomal_uL1-like"/>
</dbReference>
<dbReference type="InterPro" id="IPR028364">
    <property type="entry name" value="Ribosomal_uL1/biogenesis"/>
</dbReference>
<dbReference type="InterPro" id="IPR016095">
    <property type="entry name" value="Ribosomal_uL1_3-a/b-sand"/>
</dbReference>
<dbReference type="NCBIfam" id="TIGR01169">
    <property type="entry name" value="rplA_bact"/>
    <property type="match status" value="1"/>
</dbReference>
<dbReference type="PANTHER" id="PTHR36427">
    <property type="entry name" value="54S RIBOSOMAL PROTEIN L1, MITOCHONDRIAL"/>
    <property type="match status" value="1"/>
</dbReference>
<dbReference type="PANTHER" id="PTHR36427:SF3">
    <property type="entry name" value="LARGE RIBOSOMAL SUBUNIT PROTEIN UL1M"/>
    <property type="match status" value="1"/>
</dbReference>
<dbReference type="Pfam" id="PF00687">
    <property type="entry name" value="Ribosomal_L1"/>
    <property type="match status" value="1"/>
</dbReference>
<dbReference type="PIRSF" id="PIRSF002155">
    <property type="entry name" value="Ribosomal_L1"/>
    <property type="match status" value="1"/>
</dbReference>
<dbReference type="SUPFAM" id="SSF56808">
    <property type="entry name" value="Ribosomal protein L1"/>
    <property type="match status" value="1"/>
</dbReference>
<organism>
    <name type="scientific">Bartonella tribocorum (strain CIP 105476 / IBS 506)</name>
    <dbReference type="NCBI Taxonomy" id="382640"/>
    <lineage>
        <taxon>Bacteria</taxon>
        <taxon>Pseudomonadati</taxon>
        <taxon>Pseudomonadota</taxon>
        <taxon>Alphaproteobacteria</taxon>
        <taxon>Hyphomicrobiales</taxon>
        <taxon>Bartonellaceae</taxon>
        <taxon>Bartonella</taxon>
    </lineage>
</organism>
<sequence>MAKVAKRIKNIRKDVDFNQLYALNDAVSMVKERAVAKFDETIEISMNLGVDPRHADQMVRGVAHLPNGTGRNIRVAVFARGDKAEEAKAAGADIVGAEDLFESINGGVIDFDRCIATPDMMPLVGRLGKILGPRSLMPNPKVGTVTLDVAGAVKASKGGAVEFRVEKAGIVHAGIGKASFGVEKIVENIKAFASAVIKAKPQGAKGEYIKRVAVSSTMGVGVKVDPATVRSESV</sequence>
<proteinExistence type="inferred from homology"/>
<comment type="function">
    <text evidence="1">Binds directly to 23S rRNA. The L1 stalk is quite mobile in the ribosome, and is involved in E site tRNA release.</text>
</comment>
<comment type="function">
    <text evidence="1">Protein L1 is also a translational repressor protein, it controls the translation of the L11 operon by binding to its mRNA.</text>
</comment>
<comment type="subunit">
    <text evidence="1">Part of the 50S ribosomal subunit.</text>
</comment>
<comment type="similarity">
    <text evidence="1">Belongs to the universal ribosomal protein uL1 family.</text>
</comment>